<dbReference type="EC" id="5.1.1.3" evidence="1"/>
<dbReference type="EMBL" id="CP000851">
    <property type="protein sequence ID" value="ABV85494.1"/>
    <property type="molecule type" value="Genomic_DNA"/>
</dbReference>
<dbReference type="RefSeq" id="WP_012153440.1">
    <property type="nucleotide sequence ID" value="NC_009901.1"/>
</dbReference>
<dbReference type="SMR" id="A8GYV7"/>
<dbReference type="STRING" id="398579.Spea_0165"/>
<dbReference type="KEGG" id="spl:Spea_0165"/>
<dbReference type="eggNOG" id="COG0796">
    <property type="taxonomic scope" value="Bacteria"/>
</dbReference>
<dbReference type="HOGENOM" id="CLU_052344_2_0_6"/>
<dbReference type="OrthoDB" id="9801055at2"/>
<dbReference type="UniPathway" id="UPA00219"/>
<dbReference type="Proteomes" id="UP000002608">
    <property type="component" value="Chromosome"/>
</dbReference>
<dbReference type="GO" id="GO:0008881">
    <property type="term" value="F:glutamate racemase activity"/>
    <property type="evidence" value="ECO:0007669"/>
    <property type="project" value="UniProtKB-UniRule"/>
</dbReference>
<dbReference type="GO" id="GO:0071555">
    <property type="term" value="P:cell wall organization"/>
    <property type="evidence" value="ECO:0007669"/>
    <property type="project" value="UniProtKB-KW"/>
</dbReference>
<dbReference type="GO" id="GO:0009252">
    <property type="term" value="P:peptidoglycan biosynthetic process"/>
    <property type="evidence" value="ECO:0007669"/>
    <property type="project" value="UniProtKB-UniRule"/>
</dbReference>
<dbReference type="GO" id="GO:0008360">
    <property type="term" value="P:regulation of cell shape"/>
    <property type="evidence" value="ECO:0007669"/>
    <property type="project" value="UniProtKB-KW"/>
</dbReference>
<dbReference type="FunFam" id="3.40.50.1860:FF:000001">
    <property type="entry name" value="Glutamate racemase"/>
    <property type="match status" value="1"/>
</dbReference>
<dbReference type="Gene3D" id="3.40.50.1860">
    <property type="match status" value="2"/>
</dbReference>
<dbReference type="HAMAP" id="MF_00258">
    <property type="entry name" value="Glu_racemase"/>
    <property type="match status" value="1"/>
</dbReference>
<dbReference type="InterPro" id="IPR015942">
    <property type="entry name" value="Asp/Glu/hydantoin_racemase"/>
</dbReference>
<dbReference type="InterPro" id="IPR001920">
    <property type="entry name" value="Asp/Glu_race"/>
</dbReference>
<dbReference type="InterPro" id="IPR018187">
    <property type="entry name" value="Asp/Glu_racemase_AS_1"/>
</dbReference>
<dbReference type="InterPro" id="IPR033134">
    <property type="entry name" value="Asp/Glu_racemase_AS_2"/>
</dbReference>
<dbReference type="InterPro" id="IPR004391">
    <property type="entry name" value="Glu_race"/>
</dbReference>
<dbReference type="NCBIfam" id="TIGR00067">
    <property type="entry name" value="glut_race"/>
    <property type="match status" value="1"/>
</dbReference>
<dbReference type="PANTHER" id="PTHR21198">
    <property type="entry name" value="GLUTAMATE RACEMASE"/>
    <property type="match status" value="1"/>
</dbReference>
<dbReference type="PANTHER" id="PTHR21198:SF2">
    <property type="entry name" value="GLUTAMATE RACEMASE"/>
    <property type="match status" value="1"/>
</dbReference>
<dbReference type="Pfam" id="PF01177">
    <property type="entry name" value="Asp_Glu_race"/>
    <property type="match status" value="1"/>
</dbReference>
<dbReference type="SUPFAM" id="SSF53681">
    <property type="entry name" value="Aspartate/glutamate racemase"/>
    <property type="match status" value="2"/>
</dbReference>
<dbReference type="PROSITE" id="PS00923">
    <property type="entry name" value="ASP_GLU_RACEMASE_1"/>
    <property type="match status" value="1"/>
</dbReference>
<dbReference type="PROSITE" id="PS00924">
    <property type="entry name" value="ASP_GLU_RACEMASE_2"/>
    <property type="match status" value="1"/>
</dbReference>
<proteinExistence type="inferred from homology"/>
<keyword id="KW-0133">Cell shape</keyword>
<keyword id="KW-0961">Cell wall biogenesis/degradation</keyword>
<keyword id="KW-0413">Isomerase</keyword>
<keyword id="KW-0573">Peptidoglycan synthesis</keyword>
<keyword id="KW-1185">Reference proteome</keyword>
<sequence length="268" mass="28915">MFGPILIFDSGIGGLSIFDEIRKVLPDQDCCYLFDNARLPYGELEESVLIKGCVELICEQALKIDASLVVVACNSASTLVLPGLRERLSIPIVGVVPAIKPAAKLSIARHIGLLATPGTIKRSYTRELIEQFADGCKVELFGSSELVMLAEAKLAGESVDLIKLRAQLEPIRQSKLDTLVLGCTHFPIIASEMQQILGNGVKLLDSGVAIAQRVVFLLNEFSLDKVVDNRTKNLTAIYTTAEISAGLTTRLAEKGFTKIVSRSSANLG</sequence>
<reference key="1">
    <citation type="submission" date="2007-10" db="EMBL/GenBank/DDBJ databases">
        <title>Complete sequence of Shewanella pealeana ATCC 700345.</title>
        <authorList>
            <consortium name="US DOE Joint Genome Institute"/>
            <person name="Copeland A."/>
            <person name="Lucas S."/>
            <person name="Lapidus A."/>
            <person name="Barry K."/>
            <person name="Glavina del Rio T."/>
            <person name="Dalin E."/>
            <person name="Tice H."/>
            <person name="Pitluck S."/>
            <person name="Chertkov O."/>
            <person name="Brettin T."/>
            <person name="Bruce D."/>
            <person name="Detter J.C."/>
            <person name="Han C."/>
            <person name="Schmutz J."/>
            <person name="Larimer F."/>
            <person name="Land M."/>
            <person name="Hauser L."/>
            <person name="Kyrpides N."/>
            <person name="Kim E."/>
            <person name="Zhao J.-S.Z."/>
            <person name="Manno D."/>
            <person name="Hawari J."/>
            <person name="Richardson P."/>
        </authorList>
    </citation>
    <scope>NUCLEOTIDE SEQUENCE [LARGE SCALE GENOMIC DNA]</scope>
    <source>
        <strain>ATCC 700345 / ANG-SQ1</strain>
    </source>
</reference>
<feature type="chain" id="PRO_1000078573" description="Glutamate racemase">
    <location>
        <begin position="1"/>
        <end position="268"/>
    </location>
</feature>
<feature type="active site" description="Proton donor/acceptor" evidence="1">
    <location>
        <position position="73"/>
    </location>
</feature>
<feature type="active site" description="Proton donor/acceptor" evidence="1">
    <location>
        <position position="183"/>
    </location>
</feature>
<feature type="binding site" evidence="1">
    <location>
        <begin position="9"/>
        <end position="10"/>
    </location>
    <ligand>
        <name>substrate</name>
    </ligand>
</feature>
<feature type="binding site" evidence="1">
    <location>
        <begin position="41"/>
        <end position="42"/>
    </location>
    <ligand>
        <name>substrate</name>
    </ligand>
</feature>
<feature type="binding site" evidence="1">
    <location>
        <begin position="74"/>
        <end position="75"/>
    </location>
    <ligand>
        <name>substrate</name>
    </ligand>
</feature>
<feature type="binding site" evidence="1">
    <location>
        <begin position="184"/>
        <end position="185"/>
    </location>
    <ligand>
        <name>substrate</name>
    </ligand>
</feature>
<comment type="function">
    <text evidence="1">Provides the (R)-glutamate required for cell wall biosynthesis.</text>
</comment>
<comment type="catalytic activity">
    <reaction evidence="1">
        <text>L-glutamate = D-glutamate</text>
        <dbReference type="Rhea" id="RHEA:12813"/>
        <dbReference type="ChEBI" id="CHEBI:29985"/>
        <dbReference type="ChEBI" id="CHEBI:29986"/>
        <dbReference type="EC" id="5.1.1.3"/>
    </reaction>
</comment>
<comment type="pathway">
    <text evidence="1">Cell wall biogenesis; peptidoglycan biosynthesis.</text>
</comment>
<comment type="similarity">
    <text evidence="1">Belongs to the aspartate/glutamate racemases family.</text>
</comment>
<gene>
    <name evidence="1" type="primary">murI</name>
    <name type="ordered locus">Spea_0165</name>
</gene>
<name>MURI_SHEPA</name>
<evidence type="ECO:0000255" key="1">
    <source>
        <dbReference type="HAMAP-Rule" id="MF_00258"/>
    </source>
</evidence>
<protein>
    <recommendedName>
        <fullName evidence="1">Glutamate racemase</fullName>
        <ecNumber evidence="1">5.1.1.3</ecNumber>
    </recommendedName>
</protein>
<accession>A8GYV7</accession>
<organism>
    <name type="scientific">Shewanella pealeana (strain ATCC 700345 / ANG-SQ1)</name>
    <dbReference type="NCBI Taxonomy" id="398579"/>
    <lineage>
        <taxon>Bacteria</taxon>
        <taxon>Pseudomonadati</taxon>
        <taxon>Pseudomonadota</taxon>
        <taxon>Gammaproteobacteria</taxon>
        <taxon>Alteromonadales</taxon>
        <taxon>Shewanellaceae</taxon>
        <taxon>Shewanella</taxon>
    </lineage>
</organism>